<sequence length="379" mass="43310">MPAVTYEHIKTCKQSGARLGIVHTPHGSFETPMFMPVGTKATVKTMSPEELRQIEAKIILGNTYHLWLQPGNDIIKHAGGLHKFMNWDGPILTDSGGFQVFSLSNLRKITEEGVEFRHHTNGSKLFLSPEKSMQIQNDLGSDIMMAFDECPPMPAEYDYVKKSIERTTRWAKRCLDAHQRPEDQALFGIIQGGEYEDLREQSAKDLVELDFPGYAIGGLSVGEPKPVMYKMVEHTEQFMPKDKPRYLMGVGSPDALIECSIRGMDMFDCVLPTRIARNGTCMTSQGRLVIKNAKFADDLRPLDENCDCYTCQNYSRAYIRHLIKAEETFGIRLTTIHNLHFLLKLMEDIRQAIREDRLLDFKEEFFEQYGLNVENPKNF</sequence>
<gene>
    <name evidence="1" type="primary">tgt</name>
    <name type="ordered locus">SAOUHSC_01748</name>
</gene>
<comment type="function">
    <text evidence="1">Catalyzes the base-exchange of a guanine (G) residue with the queuine precursor 7-aminomethyl-7-deazaguanine (PreQ1) at position 34 (anticodon wobble position) in tRNAs with GU(N) anticodons (tRNA-Asp, -Asn, -His and -Tyr). Catalysis occurs through a double-displacement mechanism. The nucleophile active site attacks the C1' of nucleotide 34 to detach the guanine base from the RNA, forming a covalent enzyme-RNA intermediate. The proton acceptor active site deprotonates the incoming PreQ1, allowing a nucleophilic attack on the C1' of the ribose to form the product. After dissociation, two additional enzymatic reactions on the tRNA convert PreQ1 to queuine (Q), resulting in the hypermodified nucleoside queuosine (7-(((4,5-cis-dihydroxy-2-cyclopenten-1-yl)amino)methyl)-7-deazaguanosine).</text>
</comment>
<comment type="catalytic activity">
    <reaction evidence="1">
        <text>7-aminomethyl-7-carbaguanine + guanosine(34) in tRNA = 7-aminomethyl-7-carbaguanosine(34) in tRNA + guanine</text>
        <dbReference type="Rhea" id="RHEA:24104"/>
        <dbReference type="Rhea" id="RHEA-COMP:10341"/>
        <dbReference type="Rhea" id="RHEA-COMP:10342"/>
        <dbReference type="ChEBI" id="CHEBI:16235"/>
        <dbReference type="ChEBI" id="CHEBI:58703"/>
        <dbReference type="ChEBI" id="CHEBI:74269"/>
        <dbReference type="ChEBI" id="CHEBI:82833"/>
        <dbReference type="EC" id="2.4.2.29"/>
    </reaction>
</comment>
<comment type="cofactor">
    <cofactor evidence="1">
        <name>Zn(2+)</name>
        <dbReference type="ChEBI" id="CHEBI:29105"/>
    </cofactor>
    <text evidence="1">Binds 1 zinc ion per subunit.</text>
</comment>
<comment type="pathway">
    <text evidence="1">tRNA modification; tRNA-queuosine biosynthesis.</text>
</comment>
<comment type="subunit">
    <text evidence="1">Homodimer. Within each dimer, one monomer is responsible for RNA recognition and catalysis, while the other monomer binds to the replacement base PreQ1.</text>
</comment>
<comment type="similarity">
    <text evidence="1">Belongs to the queuine tRNA-ribosyltransferase family.</text>
</comment>
<evidence type="ECO:0000255" key="1">
    <source>
        <dbReference type="HAMAP-Rule" id="MF_00168"/>
    </source>
</evidence>
<protein>
    <recommendedName>
        <fullName evidence="1">Queuine tRNA-ribosyltransferase</fullName>
        <ecNumber evidence="1">2.4.2.29</ecNumber>
    </recommendedName>
    <alternativeName>
        <fullName evidence="1">Guanine insertion enzyme</fullName>
    </alternativeName>
    <alternativeName>
        <fullName evidence="1">tRNA-guanine transglycosylase</fullName>
    </alternativeName>
</protein>
<proteinExistence type="inferred from homology"/>
<accession>Q2FXT6</accession>
<dbReference type="EC" id="2.4.2.29" evidence="1"/>
<dbReference type="EMBL" id="CP000253">
    <property type="protein sequence ID" value="ABD30818.1"/>
    <property type="molecule type" value="Genomic_DNA"/>
</dbReference>
<dbReference type="RefSeq" id="WP_001112045.1">
    <property type="nucleotide sequence ID" value="NZ_LS483365.1"/>
</dbReference>
<dbReference type="RefSeq" id="YP_500254.1">
    <property type="nucleotide sequence ID" value="NC_007795.1"/>
</dbReference>
<dbReference type="SMR" id="Q2FXT6"/>
<dbReference type="STRING" id="93061.SAOUHSC_01748"/>
<dbReference type="PaxDb" id="1280-SAXN108_1666"/>
<dbReference type="GeneID" id="3920547"/>
<dbReference type="KEGG" id="sao:SAOUHSC_01748"/>
<dbReference type="PATRIC" id="fig|93061.5.peg.1592"/>
<dbReference type="eggNOG" id="COG0343">
    <property type="taxonomic scope" value="Bacteria"/>
</dbReference>
<dbReference type="HOGENOM" id="CLU_022060_0_1_9"/>
<dbReference type="OrthoDB" id="9805417at2"/>
<dbReference type="UniPathway" id="UPA00392"/>
<dbReference type="PRO" id="PR:Q2FXT6"/>
<dbReference type="Proteomes" id="UP000008816">
    <property type="component" value="Chromosome"/>
</dbReference>
<dbReference type="GO" id="GO:0005737">
    <property type="term" value="C:cytoplasm"/>
    <property type="evidence" value="ECO:0000318"/>
    <property type="project" value="GO_Central"/>
</dbReference>
<dbReference type="GO" id="GO:0005829">
    <property type="term" value="C:cytosol"/>
    <property type="evidence" value="ECO:0000318"/>
    <property type="project" value="GO_Central"/>
</dbReference>
<dbReference type="GO" id="GO:0046872">
    <property type="term" value="F:metal ion binding"/>
    <property type="evidence" value="ECO:0007669"/>
    <property type="project" value="UniProtKB-KW"/>
</dbReference>
<dbReference type="GO" id="GO:0008479">
    <property type="term" value="F:tRNA-guanosine(34) queuine transglycosylase activity"/>
    <property type="evidence" value="ECO:0007669"/>
    <property type="project" value="UniProtKB-UniRule"/>
</dbReference>
<dbReference type="GO" id="GO:0008616">
    <property type="term" value="P:queuosine biosynthetic process"/>
    <property type="evidence" value="ECO:0000318"/>
    <property type="project" value="GO_Central"/>
</dbReference>
<dbReference type="GO" id="GO:0002099">
    <property type="term" value="P:tRNA wobble guanine modification"/>
    <property type="evidence" value="ECO:0000318"/>
    <property type="project" value="GO_Central"/>
</dbReference>
<dbReference type="GO" id="GO:0101030">
    <property type="term" value="P:tRNA-guanine transglycosylation"/>
    <property type="evidence" value="ECO:0007669"/>
    <property type="project" value="InterPro"/>
</dbReference>
<dbReference type="FunFam" id="3.20.20.105:FF:000001">
    <property type="entry name" value="Queuine tRNA-ribosyltransferase"/>
    <property type="match status" value="1"/>
</dbReference>
<dbReference type="Gene3D" id="3.20.20.105">
    <property type="entry name" value="Queuine tRNA-ribosyltransferase-like"/>
    <property type="match status" value="1"/>
</dbReference>
<dbReference type="HAMAP" id="MF_00168">
    <property type="entry name" value="Q_tRNA_Tgt"/>
    <property type="match status" value="1"/>
</dbReference>
<dbReference type="InterPro" id="IPR050076">
    <property type="entry name" value="ArchSynthase1/Queuine_TRR"/>
</dbReference>
<dbReference type="InterPro" id="IPR004803">
    <property type="entry name" value="TGT"/>
</dbReference>
<dbReference type="InterPro" id="IPR036511">
    <property type="entry name" value="TGT-like_sf"/>
</dbReference>
<dbReference type="InterPro" id="IPR002616">
    <property type="entry name" value="tRNA_ribo_trans-like"/>
</dbReference>
<dbReference type="NCBIfam" id="TIGR00430">
    <property type="entry name" value="Q_tRNA_tgt"/>
    <property type="match status" value="1"/>
</dbReference>
<dbReference type="NCBIfam" id="TIGR00449">
    <property type="entry name" value="tgt_general"/>
    <property type="match status" value="1"/>
</dbReference>
<dbReference type="PANTHER" id="PTHR46499">
    <property type="entry name" value="QUEUINE TRNA-RIBOSYLTRANSFERASE"/>
    <property type="match status" value="1"/>
</dbReference>
<dbReference type="PANTHER" id="PTHR46499:SF1">
    <property type="entry name" value="QUEUINE TRNA-RIBOSYLTRANSFERASE"/>
    <property type="match status" value="1"/>
</dbReference>
<dbReference type="Pfam" id="PF01702">
    <property type="entry name" value="TGT"/>
    <property type="match status" value="1"/>
</dbReference>
<dbReference type="SUPFAM" id="SSF51713">
    <property type="entry name" value="tRNA-guanine transglycosylase"/>
    <property type="match status" value="1"/>
</dbReference>
<reference key="1">
    <citation type="book" date="2006" name="Gram positive pathogens, 2nd edition">
        <title>The Staphylococcus aureus NCTC 8325 genome.</title>
        <editorList>
            <person name="Fischetti V."/>
            <person name="Novick R."/>
            <person name="Ferretti J."/>
            <person name="Portnoy D."/>
            <person name="Rood J."/>
        </editorList>
        <authorList>
            <person name="Gillaspy A.F."/>
            <person name="Worrell V."/>
            <person name="Orvis J."/>
            <person name="Roe B.A."/>
            <person name="Dyer D.W."/>
            <person name="Iandolo J.J."/>
        </authorList>
    </citation>
    <scope>NUCLEOTIDE SEQUENCE [LARGE SCALE GENOMIC DNA]</scope>
    <source>
        <strain>NCTC 8325 / PS 47</strain>
    </source>
</reference>
<keyword id="KW-0328">Glycosyltransferase</keyword>
<keyword id="KW-0479">Metal-binding</keyword>
<keyword id="KW-0671">Queuosine biosynthesis</keyword>
<keyword id="KW-1185">Reference proteome</keyword>
<keyword id="KW-0808">Transferase</keyword>
<keyword id="KW-0819">tRNA processing</keyword>
<keyword id="KW-0862">Zinc</keyword>
<feature type="chain" id="PRO_1000016863" description="Queuine tRNA-ribosyltransferase">
    <location>
        <begin position="1"/>
        <end position="379"/>
    </location>
</feature>
<feature type="region of interest" description="RNA binding" evidence="1">
    <location>
        <begin position="249"/>
        <end position="255"/>
    </location>
</feature>
<feature type="region of interest" description="RNA binding; important for wobble base 34 recognition" evidence="1">
    <location>
        <begin position="273"/>
        <end position="277"/>
    </location>
</feature>
<feature type="active site" description="Proton acceptor" evidence="1">
    <location>
        <position position="94"/>
    </location>
</feature>
<feature type="active site" description="Nucleophile" evidence="1">
    <location>
        <position position="268"/>
    </location>
</feature>
<feature type="binding site" evidence="1">
    <location>
        <begin position="94"/>
        <end position="98"/>
    </location>
    <ligand>
        <name>substrate</name>
    </ligand>
</feature>
<feature type="binding site" evidence="1">
    <location>
        <position position="148"/>
    </location>
    <ligand>
        <name>substrate</name>
    </ligand>
</feature>
<feature type="binding site" evidence="1">
    <location>
        <position position="191"/>
    </location>
    <ligand>
        <name>substrate</name>
    </ligand>
</feature>
<feature type="binding site" evidence="1">
    <location>
        <position position="218"/>
    </location>
    <ligand>
        <name>substrate</name>
    </ligand>
</feature>
<feature type="binding site" evidence="1">
    <location>
        <position position="306"/>
    </location>
    <ligand>
        <name>Zn(2+)</name>
        <dbReference type="ChEBI" id="CHEBI:29105"/>
    </ligand>
</feature>
<feature type="binding site" evidence="1">
    <location>
        <position position="308"/>
    </location>
    <ligand>
        <name>Zn(2+)</name>
        <dbReference type="ChEBI" id="CHEBI:29105"/>
    </ligand>
</feature>
<feature type="binding site" evidence="1">
    <location>
        <position position="311"/>
    </location>
    <ligand>
        <name>Zn(2+)</name>
        <dbReference type="ChEBI" id="CHEBI:29105"/>
    </ligand>
</feature>
<feature type="binding site" evidence="1">
    <location>
        <position position="337"/>
    </location>
    <ligand>
        <name>Zn(2+)</name>
        <dbReference type="ChEBI" id="CHEBI:29105"/>
    </ligand>
</feature>
<organism>
    <name type="scientific">Staphylococcus aureus (strain NCTC 8325 / PS 47)</name>
    <dbReference type="NCBI Taxonomy" id="93061"/>
    <lineage>
        <taxon>Bacteria</taxon>
        <taxon>Bacillati</taxon>
        <taxon>Bacillota</taxon>
        <taxon>Bacilli</taxon>
        <taxon>Bacillales</taxon>
        <taxon>Staphylococcaceae</taxon>
        <taxon>Staphylococcus</taxon>
    </lineage>
</organism>
<name>TGT_STAA8</name>